<dbReference type="EMBL" id="CP000395">
    <property type="protein sequence ID" value="ABH02061.1"/>
    <property type="molecule type" value="Genomic_DNA"/>
</dbReference>
<dbReference type="EMBL" id="CP002933">
    <property type="protein sequence ID" value="AEL70002.1"/>
    <property type="status" value="ALT_INIT"/>
    <property type="molecule type" value="Genomic_DNA"/>
</dbReference>
<dbReference type="RefSeq" id="WP_004789867.1">
    <property type="nucleotide sequence ID" value="NZ_CP160066.1"/>
</dbReference>
<dbReference type="SMR" id="Q0SM67"/>
<dbReference type="STRING" id="29518.BLA32_00300"/>
<dbReference type="GeneID" id="77265640"/>
<dbReference type="KEGG" id="baf:BAPKO_0836"/>
<dbReference type="KEGG" id="bafz:BafPKo_0812"/>
<dbReference type="PATRIC" id="fig|390236.22.peg.774"/>
<dbReference type="eggNOG" id="COG2088">
    <property type="taxonomic scope" value="Bacteria"/>
</dbReference>
<dbReference type="HOGENOM" id="CLU_3150088_0_0_12"/>
<dbReference type="OrthoDB" id="9796286at2"/>
<dbReference type="Proteomes" id="UP000005216">
    <property type="component" value="Chromosome"/>
</dbReference>
<dbReference type="GO" id="GO:0000917">
    <property type="term" value="P:division septum assembly"/>
    <property type="evidence" value="ECO:0007669"/>
    <property type="project" value="UniProtKB-KW"/>
</dbReference>
<dbReference type="GO" id="GO:0030435">
    <property type="term" value="P:sporulation resulting in formation of a cellular spore"/>
    <property type="evidence" value="ECO:0007669"/>
    <property type="project" value="InterPro"/>
</dbReference>
<dbReference type="Gene3D" id="3.30.1120.40">
    <property type="entry name" value="Stage V sporulation protein G"/>
    <property type="match status" value="1"/>
</dbReference>
<dbReference type="HAMAP" id="MF_00819">
    <property type="entry name" value="SpoVG"/>
    <property type="match status" value="1"/>
</dbReference>
<dbReference type="InterPro" id="IPR007170">
    <property type="entry name" value="SpoVG"/>
</dbReference>
<dbReference type="InterPro" id="IPR036751">
    <property type="entry name" value="SpoVG_sf"/>
</dbReference>
<dbReference type="NCBIfam" id="NF009749">
    <property type="entry name" value="PRK13259.1"/>
    <property type="match status" value="1"/>
</dbReference>
<dbReference type="PANTHER" id="PTHR38429">
    <property type="entry name" value="SEPTATION PROTEIN SPOVG-RELATED"/>
    <property type="match status" value="1"/>
</dbReference>
<dbReference type="PANTHER" id="PTHR38429:SF1">
    <property type="entry name" value="SEPTATION PROTEIN SPOVG-RELATED"/>
    <property type="match status" value="1"/>
</dbReference>
<dbReference type="Pfam" id="PF04026">
    <property type="entry name" value="SpoVG"/>
    <property type="match status" value="1"/>
</dbReference>
<dbReference type="SUPFAM" id="SSF160537">
    <property type="entry name" value="SpoVG-like"/>
    <property type="match status" value="1"/>
</dbReference>
<evidence type="ECO:0000255" key="1">
    <source>
        <dbReference type="HAMAP-Rule" id="MF_00819"/>
    </source>
</evidence>
<evidence type="ECO:0000305" key="2"/>
<organism>
    <name type="scientific">Borreliella afzelii (strain PKo)</name>
    <name type="common">Borrelia afzelii</name>
    <dbReference type="NCBI Taxonomy" id="390236"/>
    <lineage>
        <taxon>Bacteria</taxon>
        <taxon>Pseudomonadati</taxon>
        <taxon>Spirochaetota</taxon>
        <taxon>Spirochaetia</taxon>
        <taxon>Spirochaetales</taxon>
        <taxon>Borreliaceae</taxon>
        <taxon>Borreliella</taxon>
    </lineage>
</organism>
<comment type="function">
    <text evidence="1">Could be involved in septation.</text>
</comment>
<comment type="similarity">
    <text evidence="1">Belongs to the SpoVG family.</text>
</comment>
<comment type="sequence caution" evidence="2">
    <conflict type="erroneous initiation">
        <sequence resource="EMBL-CDS" id="AEL70002"/>
    </conflict>
    <text>Truncated N-terminus.</text>
</comment>
<protein>
    <recommendedName>
        <fullName evidence="1">Putative septation protein SpoVG</fullName>
    </recommendedName>
</protein>
<keyword id="KW-0131">Cell cycle</keyword>
<keyword id="KW-0132">Cell division</keyword>
<keyword id="KW-0717">Septation</keyword>
<proteinExistence type="inferred from homology"/>
<name>SP5G_BORAP</name>
<reference key="1">
    <citation type="journal article" date="2006" name="BMC Genomics">
        <title>Comparative genome analysis: selection pressure on the Borrelia vls cassettes is essential for infectivity.</title>
        <authorList>
            <person name="Gloeckner G."/>
            <person name="Schulte-Spechtel U."/>
            <person name="Schilhabel M."/>
            <person name="Felder M."/>
            <person name="Suehnel J."/>
            <person name="Wilske B."/>
            <person name="Platzer M."/>
        </authorList>
    </citation>
    <scope>NUCLEOTIDE SEQUENCE [LARGE SCALE GENOMIC DNA]</scope>
    <source>
        <strain>PKo</strain>
    </source>
</reference>
<reference key="2">
    <citation type="journal article" date="2011" name="J. Bacteriol.">
        <title>Whole-genome sequences of two Borrelia afzelii and two Borrelia garinii Lyme disease agent isolates.</title>
        <authorList>
            <person name="Casjens S.R."/>
            <person name="Mongodin E.F."/>
            <person name="Qiu W.G."/>
            <person name="Dunn J.J."/>
            <person name="Luft B.J."/>
            <person name="Fraser-Liggett C.M."/>
            <person name="Schutzer S.E."/>
        </authorList>
    </citation>
    <scope>NUCLEOTIDE SEQUENCE [LARGE SCALE GENOMIC DNA]</scope>
    <source>
        <strain>PKo</strain>
    </source>
</reference>
<accession>Q0SM67</accession>
<accession>G0IRW7</accession>
<gene>
    <name evidence="1" type="primary">spoVG</name>
    <name type="ordered locus">BAPKO_0836</name>
    <name type="ordered locus">BafPKo_0812</name>
</gene>
<feature type="chain" id="PRO_1000062423" description="Putative septation protein SpoVG">
    <location>
        <begin position="1"/>
        <end position="97"/>
    </location>
</feature>
<feature type="sequence conflict" description="In Ref. 2; AEL70002." evidence="2" ref="2">
    <original>R</original>
    <variation>I</variation>
    <location>
        <position position="85"/>
    </location>
</feature>
<sequence length="97" mass="11226">MDITDIRIKKVESKNSGSKLLAYVAVTFDNCLVLHNIRVIKGQKGVFIAMPNRRTRVGEYKDIVHPISQDFRKTLQTSIFKEYVRENPADLELELDF</sequence>